<organismHost>
    <name type="scientific">Mus musculus</name>
    <name type="common">Mouse</name>
    <dbReference type="NCBI Taxonomy" id="10090"/>
</organismHost>
<protein>
    <recommendedName>
        <fullName>Non-structural protein 1</fullName>
    </recommendedName>
    <alternativeName>
        <fullName>Non-structural protein 1C</fullName>
    </alternativeName>
</protein>
<comment type="function">
    <text evidence="1 3">May play a minor role in antagonizing the type I IFN-mediated antiviral response (Probable). Additionally, NS1 may serve some inhibitory role in viral transcription and RNA replication (By similarity).</text>
</comment>
<comment type="subcellular location">
    <subcellularLocation>
        <location evidence="1">Host cytoplasm</location>
    </subcellularLocation>
    <subcellularLocation>
        <location evidence="1">Host mitochondrion</location>
    </subcellularLocation>
    <text evidence="1">Most NS1 resides in the mitochondria as a heteromer with NS2.</text>
</comment>
<comment type="similarity">
    <text evidence="2">Belongs to the pneumovirus non-structural protein 1 family.</text>
</comment>
<reference key="1">
    <citation type="journal article" date="1991" name="J. Gen. Virol.">
        <title>Genes 1 and 2 of pneumonia virus of mice encode proteins which have little homology with the 1C and 1B proteins of human respiratory syncytial virus.</title>
        <authorList>
            <person name="Chambers P."/>
            <person name="Pringle C.R."/>
            <person name="Easton A.J."/>
        </authorList>
    </citation>
    <scope>NUCLEOTIDE SEQUENCE [GENOMIC RNA]</scope>
</reference>
<reference key="2">
    <citation type="journal article" date="2005" name="J. Gen. Virol.">
        <title>Genome sequence of the non-pathogenic strain 15 of pneumonia virus of mice and comparison with the genome of the pathogenic strain J3666.</title>
        <authorList>
            <person name="Thorpe L.C."/>
            <person name="Easton A.J."/>
        </authorList>
    </citation>
    <scope>NUCLEOTIDE SEQUENCE [GENOMIC RNA]</scope>
</reference>
<reference key="3">
    <citation type="journal article" date="2009" name="J. Virol.">
        <title>Deletion of nonstructural proteins NS1 and NS2 from pneumonia virus of mice attenuates viral replication and reduces pulmonary cytokine expression and disease.</title>
        <authorList>
            <person name="Buchholz U.J."/>
            <person name="Ward J.M."/>
            <person name="Lamirande E.W."/>
            <person name="Heinze B."/>
            <person name="Krempl C.D."/>
            <person name="Collins P.L."/>
        </authorList>
    </citation>
    <scope>FUNCTION</scope>
</reference>
<proteinExistence type="inferred from homology"/>
<dbReference type="EMBL" id="AY743910">
    <property type="protein sequence ID" value="AAW02832.1"/>
    <property type="molecule type" value="Genomic_RNA"/>
</dbReference>
<dbReference type="PIR" id="JQ1255">
    <property type="entry name" value="MNNZ1G"/>
</dbReference>
<dbReference type="Proteomes" id="UP000133604">
    <property type="component" value="Genome"/>
</dbReference>
<dbReference type="GO" id="GO:0033650">
    <property type="term" value="C:host cell mitochondrion"/>
    <property type="evidence" value="ECO:0007669"/>
    <property type="project" value="UniProtKB-SubCell"/>
</dbReference>
<dbReference type="GO" id="GO:0052170">
    <property type="term" value="P:symbiont-mediated suppression of host innate immune response"/>
    <property type="evidence" value="ECO:0007669"/>
    <property type="project" value="UniProtKB-KW"/>
</dbReference>
<sequence>MGCNVMMELDYGGRAAWLAFHITNFDRSDLETILRGARVCNTWQDQRLSVYLVGRDCNLLRPFVQAAKFIHNTRRGQTLTHWFTKNIVFSSTGQETEPPIDPTCELLVELISG</sequence>
<feature type="chain" id="PRO_0000142807" description="Non-structural protein 1">
    <location>
        <begin position="1"/>
        <end position="113"/>
    </location>
</feature>
<keyword id="KW-1035">Host cytoplasm</keyword>
<keyword id="KW-1045">Host mitochondrion</keyword>
<keyword id="KW-0945">Host-virus interaction</keyword>
<keyword id="KW-1090">Inhibition of host innate immune response by virus</keyword>
<keyword id="KW-0922">Interferon antiviral system evasion</keyword>
<keyword id="KW-1185">Reference proteome</keyword>
<keyword id="KW-0899">Viral immunoevasion</keyword>
<evidence type="ECO:0000250" key="1">
    <source>
        <dbReference type="UniProtKB" id="P0DOE9"/>
    </source>
</evidence>
<evidence type="ECO:0000305" key="2"/>
<evidence type="ECO:0000305" key="3">
    <source>
    </source>
</evidence>
<gene>
    <name type="primary">1C</name>
    <name type="synonym">NS1</name>
</gene>
<accession>P28888</accession>
<accession>Q5MKN0</accession>
<name>NS1_MPV15</name>
<organism>
    <name type="scientific">Murine pneumonia virus (strain 15)</name>
    <name type="common">MPV</name>
    <dbReference type="NCBI Taxonomy" id="296738"/>
    <lineage>
        <taxon>Viruses</taxon>
        <taxon>Riboviria</taxon>
        <taxon>Orthornavirae</taxon>
        <taxon>Negarnaviricota</taxon>
        <taxon>Haploviricotina</taxon>
        <taxon>Monjiviricetes</taxon>
        <taxon>Mononegavirales</taxon>
        <taxon>Pneumoviridae</taxon>
        <taxon>Orthopneumovirus</taxon>
        <taxon>Orthopneumovirus muris</taxon>
        <taxon>murine pneumonia virus</taxon>
    </lineage>
</organism>